<keyword id="KW-0025">Alternative splicing</keyword>
<keyword id="KW-0067">ATP-binding</keyword>
<keyword id="KW-1003">Cell membrane</keyword>
<keyword id="KW-0375">Hydrogen ion transport</keyword>
<keyword id="KW-0406">Ion transport</keyword>
<keyword id="KW-0460">Magnesium</keyword>
<keyword id="KW-0472">Membrane</keyword>
<keyword id="KW-0479">Metal-binding</keyword>
<keyword id="KW-0547">Nucleotide-binding</keyword>
<keyword id="KW-0597">Phosphoprotein</keyword>
<keyword id="KW-0630">Potassium</keyword>
<keyword id="KW-0633">Potassium transport</keyword>
<keyword id="KW-1185">Reference proteome</keyword>
<keyword id="KW-0915">Sodium</keyword>
<keyword id="KW-0739">Sodium transport</keyword>
<keyword id="KW-1278">Translocase</keyword>
<keyword id="KW-0812">Transmembrane</keyword>
<keyword id="KW-1133">Transmembrane helix</keyword>
<keyword id="KW-0813">Transport</keyword>
<reference key="1">
    <citation type="journal article" date="1999" name="Am. J. Physiol.">
        <title>H-K-ATPase in the RCCT-28A rabbit cortical collecting duct cell line.</title>
        <authorList>
            <person name="Campbell W.G."/>
            <person name="Weiner I.D."/>
            <person name="Wingo C.S."/>
            <person name="Cain B.D."/>
        </authorList>
    </citation>
    <scope>NUCLEOTIDE SEQUENCE [MRNA] (ISOFORMS LONG AND SHORT)</scope>
    <source>
        <strain>New Zealand white</strain>
        <tissue>Kidney cortex</tissue>
    </source>
</reference>
<reference key="2">
    <citation type="journal article" date="1999" name="Kidney Int.">
        <title>Intrarenal distribution of the colonic H,K-ATPase mRNA in rabbit.</title>
        <authorList>
            <person name="Fejes-Toth G."/>
            <person name="Naray-Fejes-Toth A."/>
            <person name="Velazquez H."/>
        </authorList>
    </citation>
    <scope>NUCLEOTIDE SEQUENCE [MRNA] (ISOFORM SHORT)</scope>
    <source>
        <tissue>Renal collecting duct</tissue>
    </source>
</reference>
<reference key="3">
    <citation type="journal article" date="1998" name="FEBS Lett.">
        <title>Ouabain-sensitive H,K-ATPase: tissue-specific expression of the mammalian genes encoding the catalytic alpha subunit.</title>
        <authorList>
            <person name="Pestov N.B."/>
            <person name="Romanova L.G."/>
            <person name="Korneenko T.V."/>
            <person name="Egorov M.V."/>
            <person name="Kostina M.B."/>
            <person name="Sverdlov V.E."/>
            <person name="Askari A."/>
            <person name="Shakhparonov M.I."/>
            <person name="Modyanov N.N."/>
        </authorList>
    </citation>
    <scope>TISSUE SPECIFICITY</scope>
</reference>
<organism>
    <name type="scientific">Oryctolagus cuniculus</name>
    <name type="common">Rabbit</name>
    <dbReference type="NCBI Taxonomy" id="9986"/>
    <lineage>
        <taxon>Eukaryota</taxon>
        <taxon>Metazoa</taxon>
        <taxon>Chordata</taxon>
        <taxon>Craniata</taxon>
        <taxon>Vertebrata</taxon>
        <taxon>Euteleostomi</taxon>
        <taxon>Mammalia</taxon>
        <taxon>Eutheria</taxon>
        <taxon>Euarchontoglires</taxon>
        <taxon>Glires</taxon>
        <taxon>Lagomorpha</taxon>
        <taxon>Leporidae</taxon>
        <taxon>Oryctolagus</taxon>
    </lineage>
</organism>
<name>AT12A_RABIT</name>
<evidence type="ECO:0000250" key="1"/>
<evidence type="ECO:0000250" key="2">
    <source>
        <dbReference type="UniProtKB" id="P54707"/>
    </source>
</evidence>
<evidence type="ECO:0000250" key="3">
    <source>
        <dbReference type="UniProtKB" id="P54708"/>
    </source>
</evidence>
<evidence type="ECO:0000250" key="4">
    <source>
        <dbReference type="UniProtKB" id="Q9Z1W8"/>
    </source>
</evidence>
<evidence type="ECO:0000255" key="5"/>
<evidence type="ECO:0000256" key="6">
    <source>
        <dbReference type="SAM" id="MobiDB-lite"/>
    </source>
</evidence>
<evidence type="ECO:0000269" key="7">
    <source>
    </source>
</evidence>
<evidence type="ECO:0000303" key="8">
    <source>
    </source>
</evidence>
<evidence type="ECO:0000303" key="9">
    <source>
    </source>
</evidence>
<evidence type="ECO:0000305" key="10"/>
<dbReference type="EC" id="7.2.2.19" evidence="2"/>
<dbReference type="EC" id="7.2.2.13" evidence="2"/>
<dbReference type="EMBL" id="AF023128">
    <property type="protein sequence ID" value="AAB80941.1"/>
    <property type="molecule type" value="mRNA"/>
</dbReference>
<dbReference type="EMBL" id="AF023129">
    <property type="protein sequence ID" value="AAC13887.1"/>
    <property type="molecule type" value="mRNA"/>
</dbReference>
<dbReference type="EMBL" id="AF106063">
    <property type="protein sequence ID" value="AAD11800.1"/>
    <property type="molecule type" value="mRNA"/>
</dbReference>
<dbReference type="RefSeq" id="NP_001075496.1">
    <molecule id="Q9TV52-1"/>
    <property type="nucleotide sequence ID" value="NM_001082027.1"/>
</dbReference>
<dbReference type="SMR" id="Q9TV52"/>
<dbReference type="FunCoup" id="Q9TV52">
    <property type="interactions" value="26"/>
</dbReference>
<dbReference type="STRING" id="9986.ENSOCUP00000047907"/>
<dbReference type="PaxDb" id="9986-ENSOCUP00000006379"/>
<dbReference type="GeneID" id="100008669"/>
<dbReference type="KEGG" id="ocu:100008669"/>
<dbReference type="CTD" id="479"/>
<dbReference type="eggNOG" id="KOG0203">
    <property type="taxonomic scope" value="Eukaryota"/>
</dbReference>
<dbReference type="InParanoid" id="Q9TV52"/>
<dbReference type="OrthoDB" id="3352408at2759"/>
<dbReference type="Proteomes" id="UP000001811">
    <property type="component" value="Unplaced"/>
</dbReference>
<dbReference type="GO" id="GO:0016324">
    <property type="term" value="C:apical plasma membrane"/>
    <property type="evidence" value="ECO:0000250"/>
    <property type="project" value="UniProtKB"/>
</dbReference>
<dbReference type="GO" id="GO:0005524">
    <property type="term" value="F:ATP binding"/>
    <property type="evidence" value="ECO:0007669"/>
    <property type="project" value="UniProtKB-KW"/>
</dbReference>
<dbReference type="GO" id="GO:0016887">
    <property type="term" value="F:ATP hydrolysis activity"/>
    <property type="evidence" value="ECO:0007669"/>
    <property type="project" value="InterPro"/>
</dbReference>
<dbReference type="GO" id="GO:0046872">
    <property type="term" value="F:metal ion binding"/>
    <property type="evidence" value="ECO:0007669"/>
    <property type="project" value="UniProtKB-KW"/>
</dbReference>
<dbReference type="GO" id="GO:0008900">
    <property type="term" value="F:P-type potassium:proton transporter activity"/>
    <property type="evidence" value="ECO:0000250"/>
    <property type="project" value="UniProtKB"/>
</dbReference>
<dbReference type="GO" id="GO:0005391">
    <property type="term" value="F:P-type sodium:potassium-exchanging transporter activity"/>
    <property type="evidence" value="ECO:0000250"/>
    <property type="project" value="UniProtKB"/>
</dbReference>
<dbReference type="GO" id="GO:0030007">
    <property type="term" value="P:intracellular potassium ion homeostasis"/>
    <property type="evidence" value="ECO:0007669"/>
    <property type="project" value="TreeGrafter"/>
</dbReference>
<dbReference type="GO" id="GO:0006883">
    <property type="term" value="P:intracellular sodium ion homeostasis"/>
    <property type="evidence" value="ECO:0007669"/>
    <property type="project" value="TreeGrafter"/>
</dbReference>
<dbReference type="GO" id="GO:1990573">
    <property type="term" value="P:potassium ion import across plasma membrane"/>
    <property type="evidence" value="ECO:0007669"/>
    <property type="project" value="TreeGrafter"/>
</dbReference>
<dbReference type="GO" id="GO:0036376">
    <property type="term" value="P:sodium ion export across plasma membrane"/>
    <property type="evidence" value="ECO:0007669"/>
    <property type="project" value="TreeGrafter"/>
</dbReference>
<dbReference type="CDD" id="cd02608">
    <property type="entry name" value="P-type_ATPase_Na-K_like"/>
    <property type="match status" value="1"/>
</dbReference>
<dbReference type="FunFam" id="1.20.1110.10:FF:000038">
    <property type="entry name" value="Sodium/potassium-transporting ATPase subunit alpha"/>
    <property type="match status" value="1"/>
</dbReference>
<dbReference type="FunFam" id="2.70.150.10:FF:000003">
    <property type="entry name" value="Sodium/potassium-transporting ATPase subunit alpha"/>
    <property type="match status" value="1"/>
</dbReference>
<dbReference type="FunFam" id="3.40.1110.10:FF:000001">
    <property type="entry name" value="Sodium/potassium-transporting ATPase subunit alpha"/>
    <property type="match status" value="1"/>
</dbReference>
<dbReference type="FunFam" id="3.40.50.1000:FF:000004">
    <property type="entry name" value="Sodium/potassium-transporting ATPase subunit alpha"/>
    <property type="match status" value="1"/>
</dbReference>
<dbReference type="FunFam" id="1.20.1110.10:FF:000095">
    <property type="entry name" value="Sodium/potassium-transporting ATPase subunit alpha-1"/>
    <property type="match status" value="1"/>
</dbReference>
<dbReference type="Gene3D" id="3.40.1110.10">
    <property type="entry name" value="Calcium-transporting ATPase, cytoplasmic domain N"/>
    <property type="match status" value="1"/>
</dbReference>
<dbReference type="Gene3D" id="2.70.150.10">
    <property type="entry name" value="Calcium-transporting ATPase, cytoplasmic transduction domain A"/>
    <property type="match status" value="1"/>
</dbReference>
<dbReference type="Gene3D" id="1.20.1110.10">
    <property type="entry name" value="Calcium-transporting ATPase, transmembrane domain"/>
    <property type="match status" value="1"/>
</dbReference>
<dbReference type="Gene3D" id="3.40.50.1000">
    <property type="entry name" value="HAD superfamily/HAD-like"/>
    <property type="match status" value="1"/>
</dbReference>
<dbReference type="InterPro" id="IPR006068">
    <property type="entry name" value="ATPase_P-typ_cation-transptr_C"/>
</dbReference>
<dbReference type="InterPro" id="IPR004014">
    <property type="entry name" value="ATPase_P-typ_cation-transptr_N"/>
</dbReference>
<dbReference type="InterPro" id="IPR023299">
    <property type="entry name" value="ATPase_P-typ_cyto_dom_N"/>
</dbReference>
<dbReference type="InterPro" id="IPR018303">
    <property type="entry name" value="ATPase_P-typ_P_site"/>
</dbReference>
<dbReference type="InterPro" id="IPR023298">
    <property type="entry name" value="ATPase_P-typ_TM_dom_sf"/>
</dbReference>
<dbReference type="InterPro" id="IPR008250">
    <property type="entry name" value="ATPase_P-typ_transduc_dom_A_sf"/>
</dbReference>
<dbReference type="InterPro" id="IPR050510">
    <property type="entry name" value="Cation_transp_ATPase_P-type"/>
</dbReference>
<dbReference type="InterPro" id="IPR036412">
    <property type="entry name" value="HAD-like_sf"/>
</dbReference>
<dbReference type="InterPro" id="IPR023214">
    <property type="entry name" value="HAD_sf"/>
</dbReference>
<dbReference type="InterPro" id="IPR005775">
    <property type="entry name" value="P-type_ATPase_IIC"/>
</dbReference>
<dbReference type="InterPro" id="IPR001757">
    <property type="entry name" value="P_typ_ATPase"/>
</dbReference>
<dbReference type="InterPro" id="IPR044492">
    <property type="entry name" value="P_typ_ATPase_HD_dom"/>
</dbReference>
<dbReference type="NCBIfam" id="TIGR01106">
    <property type="entry name" value="ATPase-IIC_X-K"/>
    <property type="match status" value="1"/>
</dbReference>
<dbReference type="NCBIfam" id="TIGR01494">
    <property type="entry name" value="ATPase_P-type"/>
    <property type="match status" value="2"/>
</dbReference>
<dbReference type="PANTHER" id="PTHR43294:SF1">
    <property type="entry name" value="POTASSIUM-TRANSPORTING ATPASE ALPHA CHAIN 2"/>
    <property type="match status" value="1"/>
</dbReference>
<dbReference type="PANTHER" id="PTHR43294">
    <property type="entry name" value="SODIUM/POTASSIUM-TRANSPORTING ATPASE SUBUNIT ALPHA"/>
    <property type="match status" value="1"/>
</dbReference>
<dbReference type="Pfam" id="PF13246">
    <property type="entry name" value="Cation_ATPase"/>
    <property type="match status" value="1"/>
</dbReference>
<dbReference type="Pfam" id="PF00689">
    <property type="entry name" value="Cation_ATPase_C"/>
    <property type="match status" value="1"/>
</dbReference>
<dbReference type="Pfam" id="PF00690">
    <property type="entry name" value="Cation_ATPase_N"/>
    <property type="match status" value="1"/>
</dbReference>
<dbReference type="Pfam" id="PF00122">
    <property type="entry name" value="E1-E2_ATPase"/>
    <property type="match status" value="1"/>
</dbReference>
<dbReference type="Pfam" id="PF00702">
    <property type="entry name" value="Hydrolase"/>
    <property type="match status" value="1"/>
</dbReference>
<dbReference type="PRINTS" id="PR00119">
    <property type="entry name" value="CATATPASE"/>
</dbReference>
<dbReference type="PRINTS" id="PR00121">
    <property type="entry name" value="NAKATPASE"/>
</dbReference>
<dbReference type="SFLD" id="SFLDG00002">
    <property type="entry name" value="C1.7:_P-type_atpase_like"/>
    <property type="match status" value="1"/>
</dbReference>
<dbReference type="SFLD" id="SFLDF00027">
    <property type="entry name" value="p-type_atpase"/>
    <property type="match status" value="1"/>
</dbReference>
<dbReference type="SMART" id="SM00831">
    <property type="entry name" value="Cation_ATPase_N"/>
    <property type="match status" value="1"/>
</dbReference>
<dbReference type="SUPFAM" id="SSF81653">
    <property type="entry name" value="Calcium ATPase, transduction domain A"/>
    <property type="match status" value="1"/>
</dbReference>
<dbReference type="SUPFAM" id="SSF81665">
    <property type="entry name" value="Calcium ATPase, transmembrane domain M"/>
    <property type="match status" value="1"/>
</dbReference>
<dbReference type="SUPFAM" id="SSF56784">
    <property type="entry name" value="HAD-like"/>
    <property type="match status" value="1"/>
</dbReference>
<dbReference type="SUPFAM" id="SSF81660">
    <property type="entry name" value="Metal cation-transporting ATPase, ATP-binding domain N"/>
    <property type="match status" value="1"/>
</dbReference>
<dbReference type="PROSITE" id="PS00154">
    <property type="entry name" value="ATPASE_E1_E2"/>
    <property type="match status" value="1"/>
</dbReference>
<sequence>MAGGAHRADRATGEERKEGGGRWRAPHSPSPPGPRGCPVPLKAAAQSLCRKPTWGRYCTLLLFQRKLEIYSVELHAATDIKKKEGRDGKKDNDLELKRNQQKEELKKELDLDDHKLSNKELETKYGTDIIRGLSSTRAAELLAQNGPNALTPPKQTPEIIKFLKQMVGGFSILLWVGAVLCWIAFGIQYVSNPSASLDRVYLGTVLAVVVILTGIFAYYQEAKSTNIMASFCKMIPQQAVVIRDSEKKVIPAEQLVVGDIVEIKGGDQIPADIRLLSAQGCKVDNSSLTGESEPQSRSSGFTHENPLETKNITFYSTTCLEGTATGMVINTGDRTIIGRIASLASGVGNEKTPIAIEIEHFVHIVAGVAVSVGILFFIIAVCMKYHVLDAIIFLIAIIVANVPEGLLATVTVALSLTAKRVAKKNCLVKNLEAVETLGSTSIICSDKTGTLTQNRMTVAHLWFDNQIFVADTSEDNLNQGFDQSSGTWTSLSKIIALCNRAEFKPGEESVPIMKRVVVGDASETALLKFSEVILGDVMEIRKRNHKVVEIPFNSTNKFQLSIHQTEDPNDKRFLLVMKGAPERILEKCSTIMINGKEQPLDKSMAQAFHTAYMELGGLGERVLGFCHFYLPADEFPETYSFDSESMNFPTSNLCFVGLLSMIDPPRSTVPDAVTKCRSAGIKVIMVTGDHPITAKAIAKSVGIISANSETVEDIAKRCNIAVEQVNKRDAKAAVVTGMELKDMSPEQLDELLANYPEIVFARTSPQQKLIIVEGCQRQDAVVAVTGDGVNDSPALKKADIGVAMGITGSDAAKNAADMILLDDNFSSIVTGVEEGRLIFDNLKKTIAYTLTKNIAELCPFLIYIILGLPLPIGTITLLFIDLGTDIIPSIALAYEKAESDIMNRKPRHKKKDRLVNQQLAVYSYLHIGLMQALGAFLVYFTVYAQQGFRPTSLFHLRIAWDSDHLNDLEDNYGQEWTSYQRQYLEWTGYTAFFVGIMVQQIADLIIRKTRKNSIFKQGLFRNKVIWVGIASQIIVALLLSYGLGSITALNFTMLKAQYWFVAVPHAILIWVYDEMRKLFIRLYPGSWWDKNMYY</sequence>
<accession>Q9TV52</accession>
<accession>Q9TSI2</accession>
<accession>Q9TV53</accession>
<gene>
    <name type="primary">ATP12A</name>
    <name type="synonym">ATP1AL1</name>
</gene>
<feature type="chain" id="PRO_0000046262" description="Potassium-transporting ATPase alpha chain 2">
    <location>
        <begin position="1"/>
        <end position="1094"/>
    </location>
</feature>
<feature type="topological domain" description="Cytoplasmic" evidence="5">
    <location>
        <begin position="56"/>
        <end position="157"/>
    </location>
</feature>
<feature type="transmembrane region" description="Helical" evidence="5">
    <location>
        <begin position="158"/>
        <end position="178"/>
    </location>
</feature>
<feature type="topological domain" description="Lumenal" evidence="5">
    <location>
        <begin position="179"/>
        <end position="201"/>
    </location>
</feature>
<feature type="transmembrane region" description="Helical" evidence="5">
    <location>
        <begin position="202"/>
        <end position="222"/>
    </location>
</feature>
<feature type="topological domain" description="Cytoplasmic" evidence="5">
    <location>
        <begin position="223"/>
        <end position="358"/>
    </location>
</feature>
<feature type="transmembrane region" description="Helical" evidence="5">
    <location>
        <begin position="359"/>
        <end position="378"/>
    </location>
</feature>
<feature type="topological domain" description="Lumenal" evidence="5">
    <location>
        <begin position="379"/>
        <end position="390"/>
    </location>
</feature>
<feature type="transmembrane region" description="Helical" evidence="5">
    <location>
        <begin position="391"/>
        <end position="408"/>
    </location>
</feature>
<feature type="topological domain" description="Cytoplasmic" evidence="5">
    <location>
        <begin position="409"/>
        <end position="842"/>
    </location>
</feature>
<feature type="transmembrane region" description="Helical" evidence="5">
    <location>
        <begin position="843"/>
        <end position="862"/>
    </location>
</feature>
<feature type="topological domain" description="Lumenal" evidence="5">
    <location>
        <begin position="863"/>
        <end position="872"/>
    </location>
</feature>
<feature type="transmembrane region" description="Helical" evidence="5">
    <location>
        <begin position="873"/>
        <end position="893"/>
    </location>
</feature>
<feature type="topological domain" description="Cytoplasmic" evidence="5">
    <location>
        <begin position="894"/>
        <end position="913"/>
    </location>
</feature>
<feature type="transmembrane region" description="Helical" evidence="5">
    <location>
        <begin position="914"/>
        <end position="936"/>
    </location>
</feature>
<feature type="topological domain" description="Lumenal" evidence="5">
    <location>
        <begin position="937"/>
        <end position="988"/>
    </location>
</feature>
<feature type="transmembrane region" description="Helical" evidence="5">
    <location>
        <begin position="989"/>
        <end position="1008"/>
    </location>
</feature>
<feature type="topological domain" description="Cytoplasmic" evidence="5">
    <location>
        <begin position="1009"/>
        <end position="1022"/>
    </location>
</feature>
<feature type="transmembrane region" description="Helical" evidence="5">
    <location>
        <begin position="1023"/>
        <end position="1041"/>
    </location>
</feature>
<feature type="topological domain" description="Lumenal" evidence="5">
    <location>
        <begin position="1042"/>
        <end position="1056"/>
    </location>
</feature>
<feature type="transmembrane region" description="Helical" evidence="5">
    <location>
        <begin position="1057"/>
        <end position="1077"/>
    </location>
</feature>
<feature type="topological domain" description="Cytoplasmic" evidence="5">
    <location>
        <begin position="1078"/>
        <end position="1094"/>
    </location>
</feature>
<feature type="region of interest" description="Disordered" evidence="6">
    <location>
        <begin position="1"/>
        <end position="37"/>
    </location>
</feature>
<feature type="region of interest" description="Disordered" evidence="6">
    <location>
        <begin position="286"/>
        <end position="305"/>
    </location>
</feature>
<feature type="compositionally biased region" description="Basic and acidic residues" evidence="6">
    <location>
        <begin position="1"/>
        <end position="21"/>
    </location>
</feature>
<feature type="compositionally biased region" description="Pro residues" evidence="6">
    <location>
        <begin position="28"/>
        <end position="37"/>
    </location>
</feature>
<feature type="active site" description="4-aspartylphosphate intermediate" evidence="1">
    <location>
        <position position="446"/>
    </location>
</feature>
<feature type="binding site" evidence="1">
    <location>
        <position position="787"/>
    </location>
    <ligand>
        <name>Mg(2+)</name>
        <dbReference type="ChEBI" id="CHEBI:18420"/>
    </ligand>
</feature>
<feature type="binding site" evidence="1">
    <location>
        <position position="791"/>
    </location>
    <ligand>
        <name>Mg(2+)</name>
        <dbReference type="ChEBI" id="CHEBI:18420"/>
    </ligand>
</feature>
<feature type="modified residue" description="Phosphoserine; by PKA" evidence="1">
    <location>
        <position position="1013"/>
    </location>
</feature>
<feature type="splice variant" id="VSP_000413" description="In isoform Short." evidence="8 9">
    <original>MAGGAHRADRATGEERKEGGGRWRAPHSPSPPGPRGCPVPLKAAAQSLCRKPTWGRYCTLLLF</original>
    <variation>MR</variation>
    <location>
        <begin position="1"/>
        <end position="63"/>
    </location>
</feature>
<feature type="sequence conflict" description="In Ref. 2; AAD11800." evidence="10" ref="2">
    <original>G</original>
    <variation>E</variation>
    <location>
        <position position="300"/>
    </location>
</feature>
<feature type="sequence conflict" description="In Ref. 2; AAD11800." evidence="10" ref="2">
    <original>V</original>
    <variation>M</variation>
    <location>
        <position position="421"/>
    </location>
</feature>
<proteinExistence type="evidence at transcript level"/>
<protein>
    <recommendedName>
        <fullName>Potassium-transporting ATPase alpha chain 2</fullName>
    </recommendedName>
    <alternativeName>
        <fullName evidence="9">HK alpha 2</fullName>
    </alternativeName>
    <alternativeName>
        <fullName>Non-gastric H(+)/K(+) ATPase subunit alpha</fullName>
        <ecNumber evidence="2">7.2.2.19</ecNumber>
    </alternativeName>
    <alternativeName>
        <fullName>Non-gastric Na(+)/K(+) ATPase subunit alpha</fullName>
        <ecNumber evidence="2">7.2.2.13</ecNumber>
    </alternativeName>
    <alternativeName>
        <fullName>Proton pump</fullName>
    </alternativeName>
    <alternativeName>
        <fullName evidence="2">Sodium pump</fullName>
    </alternativeName>
</protein>
<comment type="function">
    <text evidence="2 4">The catalytic subunit of a H(+)/K(+) ATPase and/or Na(+)/K(+) ATPase pump which transports K(+) ions in exchange for Na(+) and/or H(+) ions across the apical membrane of epithelial cells. Uses ATP as an energy source to pump K(+) ions into the cell while transporting Na(+) and/or H(+) ions to the extracellular compartment (By similarity). Involved in the maintenance of electrolyte homeostasis through K(+) ion absorption in kidney and colon (By similarity). In the airway epithelium, may play a primary role in mucus acidification regulating its viscosity and clearance (By similarity).</text>
</comment>
<comment type="catalytic activity">
    <reaction evidence="2">
        <text>K(+)(out) + ATP + H2O + H(+)(in) = K(+)(in) + ADP + phosphate + 2 H(+)(out)</text>
        <dbReference type="Rhea" id="RHEA:22044"/>
        <dbReference type="ChEBI" id="CHEBI:15377"/>
        <dbReference type="ChEBI" id="CHEBI:15378"/>
        <dbReference type="ChEBI" id="CHEBI:29103"/>
        <dbReference type="ChEBI" id="CHEBI:30616"/>
        <dbReference type="ChEBI" id="CHEBI:43474"/>
        <dbReference type="ChEBI" id="CHEBI:456216"/>
        <dbReference type="EC" id="7.2.2.19"/>
    </reaction>
    <physiologicalReaction direction="left-to-right" evidence="2">
        <dbReference type="Rhea" id="RHEA:22045"/>
    </physiologicalReaction>
</comment>
<comment type="catalytic activity">
    <reaction evidence="2">
        <text>K(+)(out) + Na(+)(in) + ATP + H2O = K(+)(in) + Na(+)(out) + ADP + phosphate + H(+)</text>
        <dbReference type="Rhea" id="RHEA:18353"/>
        <dbReference type="ChEBI" id="CHEBI:15377"/>
        <dbReference type="ChEBI" id="CHEBI:15378"/>
        <dbReference type="ChEBI" id="CHEBI:29101"/>
        <dbReference type="ChEBI" id="CHEBI:29103"/>
        <dbReference type="ChEBI" id="CHEBI:30616"/>
        <dbReference type="ChEBI" id="CHEBI:43474"/>
        <dbReference type="ChEBI" id="CHEBI:456216"/>
        <dbReference type="EC" id="7.2.2.13"/>
    </reaction>
    <physiologicalReaction direction="left-to-right" evidence="2">
        <dbReference type="Rhea" id="RHEA:18354"/>
    </physiologicalReaction>
</comment>
<comment type="subunit">
    <text evidence="2 3">The X(+)/K(+) ATPase pump is composed of a catalytic alpha subunit and an auxiliary non-catalytic beta subunit. The alpha subunit pairs with the beta subunit of gastric H(+)/K(+) ATPase ATP4B or the beta subunit of Na(+)/K(+) ATPases ATP1B1 and ATP1B3; this interaction is required for the formation of a functionally active pump and its targeting at the plasma membrane.</text>
</comment>
<comment type="subcellular location">
    <subcellularLocation>
        <location evidence="2 3">Apical cell membrane</location>
        <topology evidence="5">Multi-pass membrane protein</topology>
    </subcellularLocation>
</comment>
<comment type="alternative products">
    <event type="alternative splicing"/>
    <isoform>
        <id>Q9TV52-1</id>
        <name>Long</name>
        <name>2c</name>
        <sequence type="displayed"/>
    </isoform>
    <isoform>
        <id>Q9TV52-2</id>
        <name>Short</name>
        <name>2a</name>
        <sequence type="described" ref="VSP_000413"/>
    </isoform>
</comment>
<comment type="tissue specificity">
    <text evidence="7">Found in the skin, kidney, distal colon and brain. In the kidney it is found in the connecting tubule, cortical collecting duct and outer medullary collecting duct while in the brain it is specific to choroid plexus and cortex.</text>
</comment>
<comment type="similarity">
    <text evidence="10">Belongs to the cation transport ATPase (P-type) (TC 3.A.3) family. Type IIC subfamily.</text>
</comment>